<feature type="chain" id="PRO_1000114730" description="Potassium-transporting ATPase KdpC subunit">
    <location>
        <begin position="1"/>
        <end position="201"/>
    </location>
</feature>
<feature type="transmembrane region" description="Helical" evidence="1">
    <location>
        <begin position="7"/>
        <end position="29"/>
    </location>
</feature>
<evidence type="ECO:0000255" key="1">
    <source>
        <dbReference type="HAMAP-Rule" id="MF_00276"/>
    </source>
</evidence>
<proteinExistence type="inferred from homology"/>
<keyword id="KW-0067">ATP-binding</keyword>
<keyword id="KW-0997">Cell inner membrane</keyword>
<keyword id="KW-1003">Cell membrane</keyword>
<keyword id="KW-0406">Ion transport</keyword>
<keyword id="KW-0472">Membrane</keyword>
<keyword id="KW-0547">Nucleotide-binding</keyword>
<keyword id="KW-0630">Potassium</keyword>
<keyword id="KW-0633">Potassium transport</keyword>
<keyword id="KW-0812">Transmembrane</keyword>
<keyword id="KW-1133">Transmembrane helix</keyword>
<keyword id="KW-0813">Transport</keyword>
<accession>B1Z9X9</accession>
<gene>
    <name evidence="1" type="primary">kdpC</name>
    <name type="ordered locus">Mpop_0951</name>
</gene>
<comment type="function">
    <text evidence="1">Part of the high-affinity ATP-driven potassium transport (or Kdp) system, which catalyzes the hydrolysis of ATP coupled with the electrogenic transport of potassium into the cytoplasm. This subunit acts as a catalytic chaperone that increases the ATP-binding affinity of the ATP-hydrolyzing subunit KdpB by the formation of a transient KdpB/KdpC/ATP ternary complex.</text>
</comment>
<comment type="subunit">
    <text evidence="1">The system is composed of three essential subunits: KdpA, KdpB and KdpC.</text>
</comment>
<comment type="subcellular location">
    <subcellularLocation>
        <location evidence="1">Cell inner membrane</location>
        <topology evidence="1">Single-pass membrane protein</topology>
    </subcellularLocation>
</comment>
<comment type="similarity">
    <text evidence="1">Belongs to the KdpC family.</text>
</comment>
<name>KDPC_METPB</name>
<organism>
    <name type="scientific">Methylorubrum populi (strain ATCC BAA-705 / NCIMB 13946 / BJ001)</name>
    <name type="common">Methylobacterium populi</name>
    <dbReference type="NCBI Taxonomy" id="441620"/>
    <lineage>
        <taxon>Bacteria</taxon>
        <taxon>Pseudomonadati</taxon>
        <taxon>Pseudomonadota</taxon>
        <taxon>Alphaproteobacteria</taxon>
        <taxon>Hyphomicrobiales</taxon>
        <taxon>Methylobacteriaceae</taxon>
        <taxon>Methylorubrum</taxon>
    </lineage>
</organism>
<dbReference type="EMBL" id="CP001029">
    <property type="protein sequence ID" value="ACB79128.1"/>
    <property type="molecule type" value="Genomic_DNA"/>
</dbReference>
<dbReference type="RefSeq" id="WP_012452882.1">
    <property type="nucleotide sequence ID" value="NC_010725.1"/>
</dbReference>
<dbReference type="SMR" id="B1Z9X9"/>
<dbReference type="STRING" id="441620.Mpop_0951"/>
<dbReference type="KEGG" id="mpo:Mpop_0951"/>
<dbReference type="eggNOG" id="COG2156">
    <property type="taxonomic scope" value="Bacteria"/>
</dbReference>
<dbReference type="HOGENOM" id="CLU_077094_2_0_5"/>
<dbReference type="OrthoDB" id="9788285at2"/>
<dbReference type="Proteomes" id="UP000007136">
    <property type="component" value="Chromosome"/>
</dbReference>
<dbReference type="GO" id="GO:0005886">
    <property type="term" value="C:plasma membrane"/>
    <property type="evidence" value="ECO:0007669"/>
    <property type="project" value="UniProtKB-SubCell"/>
</dbReference>
<dbReference type="GO" id="GO:0005524">
    <property type="term" value="F:ATP binding"/>
    <property type="evidence" value="ECO:0007669"/>
    <property type="project" value="UniProtKB-UniRule"/>
</dbReference>
<dbReference type="GO" id="GO:0008556">
    <property type="term" value="F:P-type potassium transmembrane transporter activity"/>
    <property type="evidence" value="ECO:0007669"/>
    <property type="project" value="InterPro"/>
</dbReference>
<dbReference type="HAMAP" id="MF_00276">
    <property type="entry name" value="KdpC"/>
    <property type="match status" value="1"/>
</dbReference>
<dbReference type="InterPro" id="IPR003820">
    <property type="entry name" value="KdpC"/>
</dbReference>
<dbReference type="NCBIfam" id="TIGR00681">
    <property type="entry name" value="kdpC"/>
    <property type="match status" value="1"/>
</dbReference>
<dbReference type="NCBIfam" id="NF001454">
    <property type="entry name" value="PRK00315.1"/>
    <property type="match status" value="1"/>
</dbReference>
<dbReference type="NCBIfam" id="NF010603">
    <property type="entry name" value="PRK13999.1"/>
    <property type="match status" value="1"/>
</dbReference>
<dbReference type="PANTHER" id="PTHR30042">
    <property type="entry name" value="POTASSIUM-TRANSPORTING ATPASE C CHAIN"/>
    <property type="match status" value="1"/>
</dbReference>
<dbReference type="PANTHER" id="PTHR30042:SF2">
    <property type="entry name" value="POTASSIUM-TRANSPORTING ATPASE KDPC SUBUNIT"/>
    <property type="match status" value="1"/>
</dbReference>
<dbReference type="Pfam" id="PF02669">
    <property type="entry name" value="KdpC"/>
    <property type="match status" value="1"/>
</dbReference>
<dbReference type="PIRSF" id="PIRSF001296">
    <property type="entry name" value="K_ATPase_KdpC"/>
    <property type="match status" value="1"/>
</dbReference>
<protein>
    <recommendedName>
        <fullName evidence="1">Potassium-transporting ATPase KdpC subunit</fullName>
    </recommendedName>
    <alternativeName>
        <fullName evidence="1">ATP phosphohydrolase [potassium-transporting] C chain</fullName>
    </alternativeName>
    <alternativeName>
        <fullName evidence="1">Potassium-binding and translocating subunit C</fullName>
    </alternativeName>
    <alternativeName>
        <fullName evidence="1">Potassium-translocating ATPase C chain</fullName>
    </alternativeName>
</protein>
<sequence>MLTHLRPALVLLTALTAITGLAYPLAMTGLAGAIFPARAAGSLIERDGRIVGSALIGQSFSQAHYFHGRPSVTTATDPADAGKTVPAPYNAANSMGSNLGPTSAVLAERVKGDLAALSAENPGAPVPVDLVTTSGSGLDPDIAPEAALFQVPRVARARGMPEDRLRALVTAQVEGRTFGVLGERRVNVLALNLAVDELARR</sequence>
<reference key="1">
    <citation type="submission" date="2008-04" db="EMBL/GenBank/DDBJ databases">
        <title>Complete sequence of chromosome of Methylobacterium populi BJ001.</title>
        <authorList>
            <consortium name="US DOE Joint Genome Institute"/>
            <person name="Copeland A."/>
            <person name="Lucas S."/>
            <person name="Lapidus A."/>
            <person name="Glavina del Rio T."/>
            <person name="Dalin E."/>
            <person name="Tice H."/>
            <person name="Bruce D."/>
            <person name="Goodwin L."/>
            <person name="Pitluck S."/>
            <person name="Chertkov O."/>
            <person name="Brettin T."/>
            <person name="Detter J.C."/>
            <person name="Han C."/>
            <person name="Kuske C.R."/>
            <person name="Schmutz J."/>
            <person name="Larimer F."/>
            <person name="Land M."/>
            <person name="Hauser L."/>
            <person name="Kyrpides N."/>
            <person name="Mikhailova N."/>
            <person name="Marx C."/>
            <person name="Richardson P."/>
        </authorList>
    </citation>
    <scope>NUCLEOTIDE SEQUENCE [LARGE SCALE GENOMIC DNA]</scope>
    <source>
        <strain>ATCC BAA-705 / NCIMB 13946 / BJ001</strain>
    </source>
</reference>